<dbReference type="PDB" id="2MAA">
    <property type="method" value="NMR"/>
    <property type="chains" value="A=1-13"/>
</dbReference>
<dbReference type="PDBsum" id="2MAA"/>
<dbReference type="BMRB" id="P56917"/>
<dbReference type="SMR" id="P56917"/>
<dbReference type="EvolutionaryTrace" id="P56917"/>
<dbReference type="GO" id="GO:0005576">
    <property type="term" value="C:extracellular region"/>
    <property type="evidence" value="ECO:0000314"/>
    <property type="project" value="UniProtKB"/>
</dbReference>
<dbReference type="GO" id="GO:0016020">
    <property type="term" value="C:membrane"/>
    <property type="evidence" value="ECO:0007669"/>
    <property type="project" value="UniProtKB-KW"/>
</dbReference>
<dbReference type="GO" id="GO:0044218">
    <property type="term" value="C:other organism cell membrane"/>
    <property type="evidence" value="ECO:0007669"/>
    <property type="project" value="UniProtKB-KW"/>
</dbReference>
<dbReference type="GO" id="GO:0008289">
    <property type="term" value="F:lipid binding"/>
    <property type="evidence" value="ECO:0007669"/>
    <property type="project" value="UniProtKB-KW"/>
</dbReference>
<dbReference type="GO" id="GO:0042742">
    <property type="term" value="P:defense response to bacterium"/>
    <property type="evidence" value="ECO:0007669"/>
    <property type="project" value="UniProtKB-KW"/>
</dbReference>
<dbReference type="GO" id="GO:0045087">
    <property type="term" value="P:innate immune response"/>
    <property type="evidence" value="ECO:0007669"/>
    <property type="project" value="UniProtKB-KW"/>
</dbReference>
<dbReference type="GO" id="GO:0050688">
    <property type="term" value="P:regulation of defense response to virus"/>
    <property type="evidence" value="ECO:0007669"/>
    <property type="project" value="UniProtKB-KW"/>
</dbReference>
<protein>
    <recommendedName>
        <fullName evidence="15">Temporin-1Ta</fullName>
        <shortName evidence="15">TA</shortName>
    </recommendedName>
    <alternativeName>
        <fullName evidence="14 17">Temporin-A</fullName>
    </alternativeName>
</protein>
<reference key="1">
    <citation type="journal article" date="1996" name="Eur. J. Biochem.">
        <title>Temporins, antimicrobial peptides from the European red frog Rana temporaria.</title>
        <authorList>
            <person name="Simmaco M."/>
            <person name="Mignogna G."/>
            <person name="Canofeni S."/>
            <person name="Miele R."/>
            <person name="Mangoni M.L."/>
            <person name="Barra D."/>
        </authorList>
    </citation>
    <scope>PROTEIN SEQUENCE</scope>
    <scope>AMIDATION AT LEU-13</scope>
    <scope>SYNTHESIS</scope>
    <scope>SUBCELLULAR LOCATION</scope>
    <source>
        <tissue>Skin secretion</tissue>
    </source>
</reference>
<reference key="2">
    <citation type="journal article" date="2021" name="Anal. Bioanal. Chem.">
        <title>Differentiation of Central Slovenian and Moscow populations of Rana temporaria frogs using peptide biomarkers of temporins family.</title>
        <authorList>
            <person name="Samgina T.Y."/>
            <person name="Vasileva I.D."/>
            <person name="Kovalev S.V."/>
            <person name="Trebse P."/>
            <person name="Torkar G."/>
            <person name="Surin A.K."/>
            <person name="Zubarev R.A."/>
            <person name="Lebedev A.T."/>
        </authorList>
    </citation>
    <scope>PROTEIN SEQUENCE</scope>
    <scope>IDENTIFICATION BY MASS SPECTROMETRY</scope>
    <scope>SUBCELLULAR LOCATION</scope>
    <scope>AMIDATION AT LEU-13</scope>
    <source>
        <tissue evidence="16">Skin secretion</tissue>
    </source>
</reference>
<reference key="3">
    <citation type="journal article" date="2000" name="Eur. J. Biochem.">
        <title>Structure-function relationships of temporins, small antimicrobial peptides from amphibian skin.</title>
        <authorList>
            <person name="Mangoni M.L."/>
            <person name="Rinaldi A.C."/>
            <person name="Di Giulio A."/>
            <person name="Mignogna G."/>
            <person name="Bozzi A."/>
            <person name="Barra D."/>
            <person name="Simmaco M."/>
        </authorList>
    </citation>
    <scope>FUNCTION</scope>
</reference>
<reference key="4">
    <citation type="journal article" date="2001" name="J. Pept. Res.">
        <title>Effects of temporins on molecular dynamics and membrane permeabilization in lipid vesicles.</title>
        <authorList>
            <person name="Rinaldi A.C."/>
            <person name="Di Giulio A."/>
            <person name="Liberi M."/>
            <person name="Gualtieri G."/>
            <person name="Oratore A."/>
            <person name="Bozzi A."/>
            <person name="Schinina M.E."/>
            <person name="Simmaco M."/>
        </authorList>
    </citation>
    <scope>FUNCTION</scope>
</reference>
<reference key="5">
    <citation type="journal article" date="2004" name="Transgenic Res.">
        <title>Transgenic potatoes expressing a novel cationic peptide are resistant to late blight and pink rot.</title>
        <authorList>
            <person name="Osusky M."/>
            <person name="Osuska L."/>
            <person name="Hancock R.E."/>
            <person name="Kay W.W."/>
            <person name="Misra S."/>
        </authorList>
    </citation>
    <scope>BIOTECHNOLOGY</scope>
</reference>
<reference key="6">
    <citation type="journal article" date="2004" name="Virology">
        <title>Inactivation of viruses infecting ectothermic animals by amphibian and piscine antimicrobial peptides.</title>
        <authorList>
            <person name="Chinchar V.G."/>
            <person name="Bryan L."/>
            <person name="Silphadaung U."/>
            <person name="Noga E."/>
            <person name="Wade D."/>
            <person name="Rollins-Smith L."/>
        </authorList>
    </citation>
    <scope>FUNCTION AS ANTIVIRAL PEPTIDE</scope>
</reference>
<reference key="7">
    <citation type="journal article" date="2005" name="J. Biol. Chem.">
        <title>Temporins, small antimicrobial peptides with leishmanicidal activity.</title>
        <authorList>
            <person name="Mangoni M.L."/>
            <person name="Saugar J.M."/>
            <person name="Dellisanti M."/>
            <person name="Barra D."/>
            <person name="Simmaco M."/>
            <person name="Rivas L."/>
        </authorList>
    </citation>
    <scope>FUNCTION</scope>
</reference>
<reference key="8">
    <citation type="journal article" date="2006" name="J. Biol. Chem.">
        <title>A synergism between temporins toward Gram-negative bacteria overcomes resistance imposed by the lipopolysaccharide protective layer.</title>
        <authorList>
            <person name="Rosenfeld Y."/>
            <person name="Barra D."/>
            <person name="Simmaco M."/>
            <person name="Shai Y."/>
            <person name="Mangoni M.L."/>
        </authorList>
    </citation>
    <scope>FUNCTION</scope>
    <scope>SUBUNIT</scope>
</reference>
<reference key="9">
    <citation type="journal article" date="2008" name="Peptides">
        <title>Temporin A is effective in MRSA-infected wounds through bactericidal activity and acceleration of wound repair in a murine model.</title>
        <authorList>
            <person name="Simonetti O."/>
            <person name="Cirioni O."/>
            <person name="Goteri G."/>
            <person name="Ghiselli R."/>
            <person name="Kamysz W."/>
            <person name="Kamysz E."/>
            <person name="Silvestri C."/>
            <person name="Orlando F."/>
            <person name="Barucca C."/>
            <person name="Scalise A."/>
            <person name="Saba V."/>
            <person name="Scalise G."/>
            <person name="Giacometti A."/>
            <person name="Offidani A."/>
        </authorList>
    </citation>
    <scope>FUNCTION</scope>
    <scope>BIOASSAY</scope>
</reference>
<reference key="10">
    <citation type="journal article" date="2014" name="Antimicrob. Agents Chemother.">
        <title>Temporins A and B stimulate migration of HaCaT keratinocytes and kill intracellular Staphylococcus aureus.</title>
        <authorList>
            <person name="Di Grazia A."/>
            <person name="Luca V."/>
            <person name="Segev-Zarko L.A."/>
            <person name="Shai Y."/>
            <person name="Mangoni M.L."/>
        </authorList>
    </citation>
    <scope>FUNCTION</scope>
    <scope>SUBCELLULAR LOCATION</scope>
    <scope>PHARMACEUTICAL</scope>
</reference>
<reference key="11">
    <citation type="journal article" date="2015" name="Molecules">
        <title>The role of phosphoglycans in the susceptibility of Leishmania mexicana to the temporin family of anti-microbial peptides.</title>
        <authorList>
            <person name="Eggimann G.A."/>
            <person name="Sweeney K."/>
            <person name="Bolt H.L."/>
            <person name="Rozatian N."/>
            <person name="Cobb S.L."/>
            <person name="Denny P.W."/>
        </authorList>
    </citation>
    <scope>FUNCTION</scope>
</reference>
<reference key="12">
    <citation type="journal article" date="2018" name="J. Pept. Sci.">
        <title>Assessment of the potential of temporin peptides from the frog Rana temporaria (Ranidae) as anti-diabetic agents.</title>
        <authorList>
            <person name="Musale V."/>
            <person name="Casciaro B."/>
            <person name="Mangoni M.L."/>
            <person name="Abdel-Wahab Y.H.A."/>
            <person name="Flatt P.R."/>
            <person name="Conlon J.M."/>
        </authorList>
    </citation>
    <scope>FUNCTION AS INSULINOTROPIC PEPTIDE</scope>
    <scope>BIOASSAY</scope>
</reference>
<reference key="13">
    <citation type="journal article" date="2008" name="J. Med. Chem.">
        <title>A different molecular mechanism underlying antimicrobial and hemolytic actions of temporins A and L.</title>
        <authorList>
            <person name="Carotenuto A."/>
            <person name="Malfi S."/>
            <person name="Saviello M.R."/>
            <person name="Campiglia P."/>
            <person name="Gomez-Monterrey I."/>
            <person name="Mangoni M.L."/>
            <person name="Gaddi L.M."/>
            <person name="Novellino E."/>
            <person name="Grieco P."/>
        </authorList>
    </citation>
    <scope>STRUCTURE BY NMR IN SDS AND DPC MICELLES</scope>
    <scope>FUNCTION</scope>
    <scope>MUTAGENESIS OF PRO-3</scope>
</reference>
<reference key="14">
    <citation type="journal article" date="2013" name="PLoS ONE">
        <title>NMR structure of temporin-1 Ta in lipopolysaccharide micelles: mechanistic insight into inactivation by outer membrane.</title>
        <authorList>
            <person name="Saravanan R."/>
            <person name="Joshi M."/>
            <person name="Mohanram H."/>
            <person name="Bhunia A."/>
            <person name="Mangoni M.L."/>
            <person name="Bhattacharjya S."/>
        </authorList>
    </citation>
    <scope>STRUCTURE BY NMR IN LPS MICELLES</scope>
    <scope>SUBUNIT</scope>
    <scope>SUBCELLULAR LOCATION</scope>
</reference>
<feature type="peptide" id="PRO_0000043579" description="Temporin-1Ta" evidence="13">
    <location>
        <begin position="1"/>
        <end position="13"/>
    </location>
</feature>
<feature type="modified residue" description="Leucine amide" evidence="12 13">
    <location>
        <position position="13"/>
    </location>
</feature>
<feature type="mutagenesis site" description="Weak increase in activity against Gram-positive and Gram-negative bacteria and fungi, and important increase in hemolytic activity." evidence="7">
    <original>P</original>
    <variation>Q</variation>
    <location>
        <position position="3"/>
    </location>
</feature>
<feature type="turn" evidence="25">
    <location>
        <begin position="3"/>
        <end position="7"/>
    </location>
</feature>
<feature type="helix" evidence="25">
    <location>
        <begin position="8"/>
        <end position="11"/>
    </location>
</feature>
<name>TPA_RANTE</name>
<sequence length="13" mass="1398">FLPLIGRVLSGIL</sequence>
<comment type="function">
    <text evidence="2 4 5 6 7 9 10 11 13 19 20">Amphipathic alpha-helical antimicrobial peptide with potent activity against Gram-positive bacteria, weak activity against Gram-negative bacteria, and moderate activity against fungi (PubMed:15513914, PubMed:16867990, PubMed:18255189, PubMed:18370376, PubMed:9022710). Mainly acts by causing membrane permeabilization (Probable). Is also able to kill S.aureus (both wild-type and MRSA) that are internalized in human keratinocytes without injuring host cells (PubMed:24514087). Rapidly inactivates both channel catfish herpesvirus (ED(50)=15 uM) and frog virus 3 (ED(50)=58 uM) over a wide temperature range (PubMed:15193922). Also displays anti-leishmania activity by damaging parasite membrane (PubMed:15513914, PubMed:25668079). Acts synergistically with temporin-L which improves temporin-1Ta activity by preventing its self-association in lipopolysaccharides (LPS) (PubMed:16867990). Does not show hemolytic activity (PubMed:15513914). In vitro, stimulates insulin release from pancreatic beta-cells in a dose-dependent manner without increasing intracellular calcium, protects beta-cells against cytokine-induced apoptosis and augments beta-cells proliferation (PubMed:29349894). In vivo, intraperitoneal injection together with a glucose load into mice does not have effect on plasma glucose levels (PubMed:29349894). In vivo, when tested on mice with methicillin-resistant S.aureus (MRSA)-infected wounds, this peptide inhibits bacterial growth and shows wound healing effect (PubMed:18255189). In vitro, promotes cell migration and wound healing (PubMed:24514087).</text>
</comment>
<comment type="subunit">
    <text evidence="1 5 7 21">Forms helical oligomeric structures in LPS lipids, the major constituent of Gram-negative bacteria outer membrane (Probable). Adopts monomeric helical conformations when bound to bacterial (anionic) and eukaryotic (zwitterionic) model membranes (PubMed:18370376). In Gram-positive bacterial mimetic membranes, the aggregation is weakly pronounced, and penetration proceeds more rapidly and is deeper than in Gram-negative bacterial mimetic membranes where aggregation is high (By similarity). Self-association is prevented by temporin-L (PubMed:16867990).</text>
</comment>
<comment type="subcellular location">
    <subcellularLocation>
        <location evidence="12 13">Secreted</location>
    </subcellularLocation>
    <subcellularLocation>
        <location evidence="8">Target cell membrane</location>
    </subcellularLocation>
    <subcellularLocation>
        <location evidence="9">Target cell</location>
        <location evidence="9">Target cell cytoplasm</location>
    </subcellularLocation>
</comment>
<comment type="tissue specificity">
    <text evidence="23 24">Expressed by the skin glands.</text>
</comment>
<comment type="domain">
    <text evidence="8">Adopts helical conformation in LPS micelles fro residues L4-I12.</text>
</comment>
<comment type="mass spectrometry" mass="1395.9" method="Electrospray" evidence="12"/>
<comment type="biotechnology">
    <text evidence="3">Could be used to protect potato plants from fungi Phytophthora infestans, Phytophthora erythroseptica and bacterium Erwinia carotovora, since the analog N-terminally modified MsrA3 (F1MASRHMF), when expressed in potato plants, conveys strong resistance to late blight and pink rot phytopathogens in addition to the bacterial pathogen Erwinia carotovora. Transgenic tubers remained disease-free during storage for more than 2 years.</text>
</comment>
<comment type="pharmaceutical">
    <text evidence="22">Is an attractive candidate for the generation of new therapeutics to treat S.aureus-related epithelial (skin) infections. It has (i) a long-lasting existence in nature as active molecule which is able to exert a direct antimicrobial activity, which should guarantee the success of the antimicrobial efficacy of temporin-based anti-infective agents; (ii) a membrane-perturbing activity on bacteria, which should limit the induction of microbial resistance; (iii) the ability to kill both reference S.aureus and MRSA strains, once internalized by human epidermal cells and to treat them; (iv) the ability to stimulate migration of these cells; (v) a chemoattractic property for human monocytes; (vi) an exogenous (nonmammalian) nature, which should allow beneficial effects in clinical medicine, reducing the possible risk of inducing an autoimmune response; and, (vii) a small size, which should allow a low production cost.</text>
</comment>
<comment type="similarity">
    <text evidence="18">Belongs to the frog skin active peptide (FSAP) family. Temporin subfamily.</text>
</comment>
<comment type="online information" name="The antimicrobial peptide database">
    <link uri="https://wangapd3.com/database/query_output.php?ID=00094"/>
</comment>
<proteinExistence type="evidence at protein level"/>
<evidence type="ECO:0000250" key="1">
    <source>
        <dbReference type="UniProtKB" id="P79874"/>
    </source>
</evidence>
<evidence type="ECO:0000269" key="2">
    <source>
    </source>
</evidence>
<evidence type="ECO:0000269" key="3">
    <source>
    </source>
</evidence>
<evidence type="ECO:0000269" key="4">
    <source>
    </source>
</evidence>
<evidence type="ECO:0000269" key="5">
    <source>
    </source>
</evidence>
<evidence type="ECO:0000269" key="6">
    <source>
    </source>
</evidence>
<evidence type="ECO:0000269" key="7">
    <source>
    </source>
</evidence>
<evidence type="ECO:0000269" key="8">
    <source>
    </source>
</evidence>
<evidence type="ECO:0000269" key="9">
    <source>
    </source>
</evidence>
<evidence type="ECO:0000269" key="10">
    <source>
    </source>
</evidence>
<evidence type="ECO:0000269" key="11">
    <source>
    </source>
</evidence>
<evidence type="ECO:0000269" key="12">
    <source>
    </source>
</evidence>
<evidence type="ECO:0000269" key="13">
    <source>
    </source>
</evidence>
<evidence type="ECO:0000303" key="14">
    <source>
    </source>
</evidence>
<evidence type="ECO:0000303" key="15">
    <source>
    </source>
</evidence>
<evidence type="ECO:0000303" key="16">
    <source>
    </source>
</evidence>
<evidence type="ECO:0000303" key="17">
    <source>
    </source>
</evidence>
<evidence type="ECO:0000305" key="18"/>
<evidence type="ECO:0000305" key="19">
    <source>
    </source>
</evidence>
<evidence type="ECO:0000305" key="20">
    <source>
    </source>
</evidence>
<evidence type="ECO:0000305" key="21">
    <source>
    </source>
</evidence>
<evidence type="ECO:0000305" key="22">
    <source>
    </source>
</evidence>
<evidence type="ECO:0000305" key="23">
    <source>
    </source>
</evidence>
<evidence type="ECO:0000305" key="24">
    <source>
    </source>
</evidence>
<evidence type="ECO:0007829" key="25">
    <source>
        <dbReference type="PDB" id="2MAA"/>
    </source>
</evidence>
<keyword id="KW-0002">3D-structure</keyword>
<keyword id="KW-0027">Amidation</keyword>
<keyword id="KW-0878">Amphibian defense peptide</keyword>
<keyword id="KW-0044">Antibiotic</keyword>
<keyword id="KW-0929">Antimicrobial</keyword>
<keyword id="KW-0930">Antiviral protein</keyword>
<keyword id="KW-0903">Direct protein sequencing</keyword>
<keyword id="KW-0391">Immunity</keyword>
<keyword id="KW-0399">Innate immunity</keyword>
<keyword id="KW-0446">Lipid-binding</keyword>
<keyword id="KW-0472">Membrane</keyword>
<keyword id="KW-0582">Pharmaceutical</keyword>
<keyword id="KW-0964">Secreted</keyword>
<keyword id="KW-1266">Target cell cytoplasm</keyword>
<keyword id="KW-1052">Target cell membrane</keyword>
<keyword id="KW-1053">Target membrane</keyword>
<accession>P56917</accession>
<organism>
    <name type="scientific">Rana temporaria</name>
    <name type="common">European common frog</name>
    <dbReference type="NCBI Taxonomy" id="8407"/>
    <lineage>
        <taxon>Eukaryota</taxon>
        <taxon>Metazoa</taxon>
        <taxon>Chordata</taxon>
        <taxon>Craniata</taxon>
        <taxon>Vertebrata</taxon>
        <taxon>Euteleostomi</taxon>
        <taxon>Amphibia</taxon>
        <taxon>Batrachia</taxon>
        <taxon>Anura</taxon>
        <taxon>Neobatrachia</taxon>
        <taxon>Ranoidea</taxon>
        <taxon>Ranidae</taxon>
        <taxon>Rana</taxon>
        <taxon>Rana</taxon>
    </lineage>
</organism>